<reference key="1">
    <citation type="submission" date="2008-05" db="EMBL/GenBank/DDBJ databases">
        <title>Genome sequence of Clostridium botulinum Ba4 strain 657.</title>
        <authorList>
            <person name="Shrivastava S."/>
            <person name="Brown J.L."/>
            <person name="Bruce D."/>
            <person name="Detter C."/>
            <person name="Munk C."/>
            <person name="Smith L.A."/>
            <person name="Smith T.J."/>
            <person name="Sutton G."/>
            <person name="Brettin T.S."/>
        </authorList>
    </citation>
    <scope>NUCLEOTIDE SEQUENCE [LARGE SCALE GENOMIC DNA]</scope>
    <source>
        <strain>657 / Type Ba4</strain>
    </source>
</reference>
<feature type="chain" id="PRO_1000214355" description="Small ribosomal subunit protein uS11">
    <location>
        <begin position="1"/>
        <end position="132"/>
    </location>
</feature>
<accession>C3KVM4</accession>
<dbReference type="EMBL" id="CP001083">
    <property type="protein sequence ID" value="ACQ54970.1"/>
    <property type="molecule type" value="Genomic_DNA"/>
</dbReference>
<dbReference type="RefSeq" id="WP_003360211.1">
    <property type="nucleotide sequence ID" value="NC_012658.1"/>
</dbReference>
<dbReference type="SMR" id="C3KVM4"/>
<dbReference type="KEGG" id="cbi:CLJ_B3762"/>
<dbReference type="HOGENOM" id="CLU_072439_5_0_9"/>
<dbReference type="Proteomes" id="UP000002333">
    <property type="component" value="Chromosome"/>
</dbReference>
<dbReference type="GO" id="GO:1990904">
    <property type="term" value="C:ribonucleoprotein complex"/>
    <property type="evidence" value="ECO:0007669"/>
    <property type="project" value="UniProtKB-KW"/>
</dbReference>
<dbReference type="GO" id="GO:0005840">
    <property type="term" value="C:ribosome"/>
    <property type="evidence" value="ECO:0007669"/>
    <property type="project" value="UniProtKB-KW"/>
</dbReference>
<dbReference type="GO" id="GO:0019843">
    <property type="term" value="F:rRNA binding"/>
    <property type="evidence" value="ECO:0007669"/>
    <property type="project" value="UniProtKB-UniRule"/>
</dbReference>
<dbReference type="GO" id="GO:0003735">
    <property type="term" value="F:structural constituent of ribosome"/>
    <property type="evidence" value="ECO:0007669"/>
    <property type="project" value="InterPro"/>
</dbReference>
<dbReference type="GO" id="GO:0006412">
    <property type="term" value="P:translation"/>
    <property type="evidence" value="ECO:0007669"/>
    <property type="project" value="UniProtKB-UniRule"/>
</dbReference>
<dbReference type="FunFam" id="3.30.420.80:FF:000001">
    <property type="entry name" value="30S ribosomal protein S11"/>
    <property type="match status" value="1"/>
</dbReference>
<dbReference type="Gene3D" id="3.30.420.80">
    <property type="entry name" value="Ribosomal protein S11"/>
    <property type="match status" value="1"/>
</dbReference>
<dbReference type="HAMAP" id="MF_01310">
    <property type="entry name" value="Ribosomal_uS11"/>
    <property type="match status" value="1"/>
</dbReference>
<dbReference type="InterPro" id="IPR001971">
    <property type="entry name" value="Ribosomal_uS11"/>
</dbReference>
<dbReference type="InterPro" id="IPR019981">
    <property type="entry name" value="Ribosomal_uS11_bac-type"/>
</dbReference>
<dbReference type="InterPro" id="IPR018102">
    <property type="entry name" value="Ribosomal_uS11_CS"/>
</dbReference>
<dbReference type="InterPro" id="IPR036967">
    <property type="entry name" value="Ribosomal_uS11_sf"/>
</dbReference>
<dbReference type="NCBIfam" id="NF003698">
    <property type="entry name" value="PRK05309.1"/>
    <property type="match status" value="1"/>
</dbReference>
<dbReference type="NCBIfam" id="TIGR03632">
    <property type="entry name" value="uS11_bact"/>
    <property type="match status" value="1"/>
</dbReference>
<dbReference type="PANTHER" id="PTHR11759">
    <property type="entry name" value="40S RIBOSOMAL PROTEIN S14/30S RIBOSOMAL PROTEIN S11"/>
    <property type="match status" value="1"/>
</dbReference>
<dbReference type="Pfam" id="PF00411">
    <property type="entry name" value="Ribosomal_S11"/>
    <property type="match status" value="1"/>
</dbReference>
<dbReference type="PIRSF" id="PIRSF002131">
    <property type="entry name" value="Ribosomal_S11"/>
    <property type="match status" value="1"/>
</dbReference>
<dbReference type="SUPFAM" id="SSF53137">
    <property type="entry name" value="Translational machinery components"/>
    <property type="match status" value="1"/>
</dbReference>
<dbReference type="PROSITE" id="PS00054">
    <property type="entry name" value="RIBOSOMAL_S11"/>
    <property type="match status" value="1"/>
</dbReference>
<comment type="function">
    <text evidence="1">Located on the platform of the 30S subunit, it bridges several disparate RNA helices of the 16S rRNA. Forms part of the Shine-Dalgarno cleft in the 70S ribosome.</text>
</comment>
<comment type="subunit">
    <text evidence="1">Part of the 30S ribosomal subunit. Interacts with proteins S7 and S18. Binds to IF-3.</text>
</comment>
<comment type="similarity">
    <text evidence="1">Belongs to the universal ribosomal protein uS11 family.</text>
</comment>
<sequence>MAAGMKAKRSRRRKERKNVEHGCAHIKSTFNNSIVTITDSVGNTLSWASAGGLGFRGSRKSTPFAAQMAAETAAKAAMEHGLKSIEVYVKGPGSGREAAIRSLQAAGLEVTLIKDVTPIPHNGCRPPKRRRV</sequence>
<organism>
    <name type="scientific">Clostridium botulinum (strain 657 / Type Ba4)</name>
    <dbReference type="NCBI Taxonomy" id="515621"/>
    <lineage>
        <taxon>Bacteria</taxon>
        <taxon>Bacillati</taxon>
        <taxon>Bacillota</taxon>
        <taxon>Clostridia</taxon>
        <taxon>Eubacteriales</taxon>
        <taxon>Clostridiaceae</taxon>
        <taxon>Clostridium</taxon>
    </lineage>
</organism>
<keyword id="KW-0687">Ribonucleoprotein</keyword>
<keyword id="KW-0689">Ribosomal protein</keyword>
<keyword id="KW-0694">RNA-binding</keyword>
<keyword id="KW-0699">rRNA-binding</keyword>
<proteinExistence type="inferred from homology"/>
<protein>
    <recommendedName>
        <fullName evidence="1">Small ribosomal subunit protein uS11</fullName>
    </recommendedName>
    <alternativeName>
        <fullName evidence="2">30S ribosomal protein S11</fullName>
    </alternativeName>
</protein>
<gene>
    <name evidence="1" type="primary">rpsK</name>
    <name type="ordered locus">CLJ_B3762</name>
</gene>
<name>RS11_CLOB6</name>
<evidence type="ECO:0000255" key="1">
    <source>
        <dbReference type="HAMAP-Rule" id="MF_01310"/>
    </source>
</evidence>
<evidence type="ECO:0000305" key="2"/>